<sequence>MANSTGLQFTVKVGALPDTTFAVVDFELSEALNQPFALSLNLASSQPGIDFGAVLDQPCELLVWYEGELQRRVSGIVSRFAQGDTGFRRTRYQAEVRPALWRLGLRTNARIFQTQKPDAIISTLLEEAGITDYAFALRHDHAVREYCVQYRESDLAFINRLAAEEGLFYFHEFEAGKHRVVFADDAGALAKGPELFFNLATQGLSEGAYVRRFRYAEAVSTAEVALKDYSFKTPAYGLLHNKMSSELAHQRESYQHFDYPGRFKQDPSGKAFTGYRLDALRAGAMTGNGESNAAELRPGSSFTLTEHPNPAFNLAWQVVAVAHSGQQPQALEEESGGEPTTLSNSFEVVKATTTWRAALPYKPMVDGPQIATVVGPAGEEIYCDEFGRVKLQFPWDRYGASDDQSSCWVRVSQGWAGGQYGLIAIPRIGHEVVVSFLEGDPDQPIVTGRTFHATNPSPYPLPASKTRTSLRTSTHKGAGFNELRFEDQAGQEEVFIHAQKDMNTVVLNNRSTSVNASHTENVGGDQTVVVQHNQTVSVKENQVTEIQGEQTVAVTKNRHTTVDDNESLQVKKNIAIQSQSGDVLIATAGGFIAIDKDGNISITGKGLVLNGTRIDLN</sequence>
<evidence type="ECO:0000256" key="1">
    <source>
        <dbReference type="SAM" id="MobiDB-lite"/>
    </source>
</evidence>
<evidence type="ECO:0000269" key="2">
    <source>
    </source>
</evidence>
<evidence type="ECO:0000305" key="3"/>
<comment type="function">
    <text>A Vgr protein that is probably part of a type VI secretion system (T6SS). May be required for export of proteins involved in Rhs-mediated cellular contact-dependent growth inhibition (CDI).</text>
</comment>
<comment type="disruption phenotype">
    <text evidence="2">A double vgrGA-vgrGB deletion inhibits the ability of RhsB to inhibit cell growth. VgrGB alone restores RhsB-mediated cell growth.</text>
</comment>
<comment type="similarity">
    <text evidence="3">Belongs to the VgrG protein family.</text>
</comment>
<name>VGRGB_DICD3</name>
<reference key="1">
    <citation type="journal article" date="2011" name="J. Bacteriol.">
        <title>Genome sequence of the plant-pathogenic bacterium Dickeya dadantii 3937.</title>
        <authorList>
            <person name="Glasner J.D."/>
            <person name="Yang C.H."/>
            <person name="Reverchon S."/>
            <person name="Hugouvieux-Cotte-Pattat N."/>
            <person name="Condemine G."/>
            <person name="Bohin J.P."/>
            <person name="Van Gijsegem F."/>
            <person name="Yang S."/>
            <person name="Franza T."/>
            <person name="Expert D."/>
            <person name="Plunkett G. III"/>
            <person name="San Francisco M.J."/>
            <person name="Charkowski A.O."/>
            <person name="Py B."/>
            <person name="Bell K."/>
            <person name="Rauscher L."/>
            <person name="Rodriguez-Palenzuela P."/>
            <person name="Toussaint A."/>
            <person name="Holeva M.C."/>
            <person name="He S.Y."/>
            <person name="Douet V."/>
            <person name="Boccara M."/>
            <person name="Blanco C."/>
            <person name="Toth I."/>
            <person name="Anderson B.D."/>
            <person name="Biehl B.S."/>
            <person name="Mau B."/>
            <person name="Flynn S.M."/>
            <person name="Barras F."/>
            <person name="Lindeberg M."/>
            <person name="Birch P.R."/>
            <person name="Tsuyumu S."/>
            <person name="Shi X."/>
            <person name="Hibbing M."/>
            <person name="Yap M.N."/>
            <person name="Carpentier M."/>
            <person name="Dassa E."/>
            <person name="Umehara M."/>
            <person name="Kim J.F."/>
            <person name="Rusch M."/>
            <person name="Soni P."/>
            <person name="Mayhew G.F."/>
            <person name="Fouts D.E."/>
            <person name="Gill S.R."/>
            <person name="Blattner F.R."/>
            <person name="Keen N.T."/>
            <person name="Perna N.T."/>
        </authorList>
    </citation>
    <scope>NUCLEOTIDE SEQUENCE [LARGE SCALE GENOMIC DNA]</scope>
    <source>
        <strain>3937</strain>
    </source>
</reference>
<reference key="2">
    <citation type="journal article" date="2013" name="Proc. Natl. Acad. Sci. U.S.A.">
        <title>Rhs proteins from diverse bacteria mediate intercellular competition.</title>
        <authorList>
            <person name="Koskiniemi S."/>
            <person name="Lamoureux J.G."/>
            <person name="Nikolakakis K.C."/>
            <person name="t'Kint de Roodenbeke C."/>
            <person name="Kaplan M.D."/>
            <person name="Low D.A."/>
            <person name="Hayes C.S."/>
        </authorList>
    </citation>
    <scope>POSSIBLE FUNCTION</scope>
    <scope>DISRUPTION PHENOTYPE</scope>
    <source>
        <strain>3937</strain>
    </source>
</reference>
<protein>
    <recommendedName>
        <fullName>Putative type VI secretion system protein VgrGB</fullName>
    </recommendedName>
</protein>
<dbReference type="EMBL" id="CP002038">
    <property type="protein sequence ID" value="ADM99133.1"/>
    <property type="molecule type" value="Genomic_DNA"/>
</dbReference>
<dbReference type="RefSeq" id="WP_013318571.1">
    <property type="nucleotide sequence ID" value="NC_014500.1"/>
</dbReference>
<dbReference type="SMR" id="E0SIS4"/>
<dbReference type="STRING" id="198628.Dda3937_02771"/>
<dbReference type="KEGG" id="ddd:Dda3937_02771"/>
<dbReference type="PATRIC" id="fig|198628.6.peg.2916"/>
<dbReference type="eggNOG" id="COG3501">
    <property type="taxonomic scope" value="Bacteria"/>
</dbReference>
<dbReference type="HOGENOM" id="CLU_004121_8_2_6"/>
<dbReference type="OrthoDB" id="6710627at2"/>
<dbReference type="Proteomes" id="UP000006859">
    <property type="component" value="Chromosome"/>
</dbReference>
<dbReference type="Gene3D" id="2.30.110.50">
    <property type="match status" value="1"/>
</dbReference>
<dbReference type="Gene3D" id="4.10.220.110">
    <property type="match status" value="1"/>
</dbReference>
<dbReference type="Gene3D" id="3.55.50.10">
    <property type="entry name" value="Baseplate protein-like domains"/>
    <property type="match status" value="1"/>
</dbReference>
<dbReference type="Gene3D" id="2.40.50.230">
    <property type="entry name" value="Gp5 N-terminal domain"/>
    <property type="match status" value="1"/>
</dbReference>
<dbReference type="InterPro" id="IPR006531">
    <property type="entry name" value="Gp5/Vgr_OB"/>
</dbReference>
<dbReference type="InterPro" id="IPR054030">
    <property type="entry name" value="Gp5_Vgr_C"/>
</dbReference>
<dbReference type="InterPro" id="IPR017847">
    <property type="entry name" value="T6SS_RhsGE_Vgr_subset"/>
</dbReference>
<dbReference type="InterPro" id="IPR006533">
    <property type="entry name" value="T6SS_Vgr_RhsGE"/>
</dbReference>
<dbReference type="InterPro" id="IPR050708">
    <property type="entry name" value="T6SS_VgrG/RHS"/>
</dbReference>
<dbReference type="InterPro" id="IPR037026">
    <property type="entry name" value="Vgr_OB-fold_dom_sf"/>
</dbReference>
<dbReference type="NCBIfam" id="TIGR01646">
    <property type="entry name" value="vgr_GE"/>
    <property type="match status" value="1"/>
</dbReference>
<dbReference type="NCBIfam" id="TIGR03361">
    <property type="entry name" value="VI_Rhs_Vgr"/>
    <property type="match status" value="1"/>
</dbReference>
<dbReference type="PANTHER" id="PTHR32305">
    <property type="match status" value="1"/>
</dbReference>
<dbReference type="PANTHER" id="PTHR32305:SF11">
    <property type="entry name" value="TYPE VI SECRETION SYSTEM SPIKE PROTEIN VGRG3"/>
    <property type="match status" value="1"/>
</dbReference>
<dbReference type="Pfam" id="PF22178">
    <property type="entry name" value="Gp5_trimer_C"/>
    <property type="match status" value="1"/>
</dbReference>
<dbReference type="Pfam" id="PF04717">
    <property type="entry name" value="Phage_base_V"/>
    <property type="match status" value="1"/>
</dbReference>
<dbReference type="Pfam" id="PF05954">
    <property type="entry name" value="Phage_GPD"/>
    <property type="match status" value="1"/>
</dbReference>
<dbReference type="SUPFAM" id="SSF69255">
    <property type="entry name" value="gp5 N-terminal domain-like"/>
    <property type="match status" value="1"/>
</dbReference>
<dbReference type="SUPFAM" id="SSF69349">
    <property type="entry name" value="Phage fibre proteins"/>
    <property type="match status" value="1"/>
</dbReference>
<dbReference type="SUPFAM" id="SSF69279">
    <property type="entry name" value="Phage tail proteins"/>
    <property type="match status" value="2"/>
</dbReference>
<feature type="chain" id="PRO_0000423983" description="Putative type VI secretion system protein VgrGB">
    <location>
        <begin position="1"/>
        <end position="617"/>
    </location>
</feature>
<feature type="region of interest" description="Disordered" evidence="1">
    <location>
        <begin position="449"/>
        <end position="469"/>
    </location>
</feature>
<organism>
    <name type="scientific">Dickeya dadantii (strain 3937)</name>
    <name type="common">Erwinia chrysanthemi (strain 3937)</name>
    <dbReference type="NCBI Taxonomy" id="198628"/>
    <lineage>
        <taxon>Bacteria</taxon>
        <taxon>Pseudomonadati</taxon>
        <taxon>Pseudomonadota</taxon>
        <taxon>Gammaproteobacteria</taxon>
        <taxon>Enterobacterales</taxon>
        <taxon>Pectobacteriaceae</taxon>
        <taxon>Dickeya</taxon>
    </lineage>
</organism>
<proteinExistence type="inferred from homology"/>
<keyword id="KW-1185">Reference proteome</keyword>
<accession>E0SIS4</accession>
<gene>
    <name type="primary">vgrGB</name>
    <name type="ordered locus">Dda3937_02771</name>
</gene>